<accession>B0KNH3</accession>
<comment type="function">
    <text evidence="1">Specifically methylates the guanine in position 1207 of 16S rRNA in the 30S particle.</text>
</comment>
<comment type="catalytic activity">
    <reaction evidence="1">
        <text>guanosine(1207) in 16S rRNA + S-adenosyl-L-methionine = N(2)-methylguanosine(1207) in 16S rRNA + S-adenosyl-L-homocysteine + H(+)</text>
        <dbReference type="Rhea" id="RHEA:42736"/>
        <dbReference type="Rhea" id="RHEA-COMP:10213"/>
        <dbReference type="Rhea" id="RHEA-COMP:10214"/>
        <dbReference type="ChEBI" id="CHEBI:15378"/>
        <dbReference type="ChEBI" id="CHEBI:57856"/>
        <dbReference type="ChEBI" id="CHEBI:59789"/>
        <dbReference type="ChEBI" id="CHEBI:74269"/>
        <dbReference type="ChEBI" id="CHEBI:74481"/>
        <dbReference type="EC" id="2.1.1.172"/>
    </reaction>
</comment>
<comment type="subunit">
    <text evidence="1">Monomer.</text>
</comment>
<comment type="subcellular location">
    <subcellularLocation>
        <location evidence="1">Cytoplasm</location>
    </subcellularLocation>
</comment>
<comment type="similarity">
    <text evidence="1">Belongs to the methyltransferase superfamily. RsmC family.</text>
</comment>
<name>RSMC_PSEPG</name>
<protein>
    <recommendedName>
        <fullName evidence="1">Ribosomal RNA small subunit methyltransferase C</fullName>
        <ecNumber evidence="1">2.1.1.172</ecNumber>
    </recommendedName>
    <alternativeName>
        <fullName evidence="1">16S rRNA m2G1207 methyltransferase</fullName>
    </alternativeName>
    <alternativeName>
        <fullName evidence="1">rRNA (guanine-N(2)-)-methyltransferase RsmC</fullName>
    </alternativeName>
</protein>
<evidence type="ECO:0000255" key="1">
    <source>
        <dbReference type="HAMAP-Rule" id="MF_01862"/>
    </source>
</evidence>
<sequence length="332" mass="35910">MDPRSEVLLRQAELFQGPLLIAGAPADDLLGQLPQAQAWTWHAGDQAMLDSRFAGRSHYAVEPPDLPFDSAVLFLPKSRELAAYLLNALASRLAGRELYLVGEKRGGIEGAAKQLQAFGKPRKLDSARHCQLWQVTIDQAPQAKPLESLAERFELALEDGPLQVVSLPGVFSHGRLDRGTALLLKHLDGLPDGHMLDFGCGAGVLGATLKRRYPQSRVTMLDVDAFAVAASRLTLAANGLEGDVISGDGIDAAPTELSLILSNPPFHTGVHTNYQASENLLKKSAVHLRKGGEMRLVANSFLRYQPLIEGALGNCQVRDEADGFRIYQATHG</sequence>
<proteinExistence type="inferred from homology"/>
<keyword id="KW-0963">Cytoplasm</keyword>
<keyword id="KW-0489">Methyltransferase</keyword>
<keyword id="KW-0698">rRNA processing</keyword>
<keyword id="KW-0949">S-adenosyl-L-methionine</keyword>
<keyword id="KW-0808">Transferase</keyword>
<gene>
    <name evidence="1" type="primary">rsmC</name>
    <name type="ordered locus">PputGB1_0803</name>
</gene>
<reference key="1">
    <citation type="submission" date="2008-01" db="EMBL/GenBank/DDBJ databases">
        <title>Complete sequence of Pseudomonas putida GB-1.</title>
        <authorList>
            <consortium name="US DOE Joint Genome Institute"/>
            <person name="Copeland A."/>
            <person name="Lucas S."/>
            <person name="Lapidus A."/>
            <person name="Barry K."/>
            <person name="Glavina del Rio T."/>
            <person name="Dalin E."/>
            <person name="Tice H."/>
            <person name="Pitluck S."/>
            <person name="Bruce D."/>
            <person name="Goodwin L."/>
            <person name="Chertkov O."/>
            <person name="Brettin T."/>
            <person name="Detter J.C."/>
            <person name="Han C."/>
            <person name="Kuske C.R."/>
            <person name="Schmutz J."/>
            <person name="Larimer F."/>
            <person name="Land M."/>
            <person name="Hauser L."/>
            <person name="Kyrpides N."/>
            <person name="Kim E."/>
            <person name="McCarthy J.K."/>
            <person name="Richardson P."/>
        </authorList>
    </citation>
    <scope>NUCLEOTIDE SEQUENCE [LARGE SCALE GENOMIC DNA]</scope>
    <source>
        <strain>GB-1</strain>
    </source>
</reference>
<dbReference type="EC" id="2.1.1.172" evidence="1"/>
<dbReference type="EMBL" id="CP000926">
    <property type="protein sequence ID" value="ABY96713.1"/>
    <property type="molecule type" value="Genomic_DNA"/>
</dbReference>
<dbReference type="RefSeq" id="WP_012270513.1">
    <property type="nucleotide sequence ID" value="NC_010322.1"/>
</dbReference>
<dbReference type="SMR" id="B0KNH3"/>
<dbReference type="KEGG" id="ppg:PputGB1_0803"/>
<dbReference type="eggNOG" id="COG2813">
    <property type="taxonomic scope" value="Bacteria"/>
</dbReference>
<dbReference type="HOGENOM" id="CLU_049581_0_0_6"/>
<dbReference type="Proteomes" id="UP000002157">
    <property type="component" value="Chromosome"/>
</dbReference>
<dbReference type="GO" id="GO:0005737">
    <property type="term" value="C:cytoplasm"/>
    <property type="evidence" value="ECO:0007669"/>
    <property type="project" value="UniProtKB-SubCell"/>
</dbReference>
<dbReference type="GO" id="GO:0052914">
    <property type="term" value="F:16S rRNA (guanine(1207)-N(2))-methyltransferase activity"/>
    <property type="evidence" value="ECO:0007669"/>
    <property type="project" value="UniProtKB-EC"/>
</dbReference>
<dbReference type="GO" id="GO:0003676">
    <property type="term" value="F:nucleic acid binding"/>
    <property type="evidence" value="ECO:0007669"/>
    <property type="project" value="InterPro"/>
</dbReference>
<dbReference type="CDD" id="cd02440">
    <property type="entry name" value="AdoMet_MTases"/>
    <property type="match status" value="1"/>
</dbReference>
<dbReference type="Gene3D" id="3.40.50.150">
    <property type="entry name" value="Vaccinia Virus protein VP39"/>
    <property type="match status" value="2"/>
</dbReference>
<dbReference type="HAMAP" id="MF_01862">
    <property type="entry name" value="16SrRNA_methyltr_C"/>
    <property type="match status" value="1"/>
</dbReference>
<dbReference type="InterPro" id="IPR002052">
    <property type="entry name" value="DNA_methylase_N6_adenine_CS"/>
</dbReference>
<dbReference type="InterPro" id="IPR013675">
    <property type="entry name" value="Mtase_sm_N"/>
</dbReference>
<dbReference type="InterPro" id="IPR023543">
    <property type="entry name" value="rRNA_ssu_MeTfrase_C"/>
</dbReference>
<dbReference type="InterPro" id="IPR046977">
    <property type="entry name" value="RsmC/RlmG"/>
</dbReference>
<dbReference type="InterPro" id="IPR029063">
    <property type="entry name" value="SAM-dependent_MTases_sf"/>
</dbReference>
<dbReference type="InterPro" id="IPR007848">
    <property type="entry name" value="Small_mtfrase_dom"/>
</dbReference>
<dbReference type="PANTHER" id="PTHR47816">
    <property type="entry name" value="RIBOSOMAL RNA SMALL SUBUNIT METHYLTRANSFERASE C"/>
    <property type="match status" value="1"/>
</dbReference>
<dbReference type="PANTHER" id="PTHR47816:SF4">
    <property type="entry name" value="RIBOSOMAL RNA SMALL SUBUNIT METHYLTRANSFERASE C"/>
    <property type="match status" value="1"/>
</dbReference>
<dbReference type="Pfam" id="PF05175">
    <property type="entry name" value="MTS"/>
    <property type="match status" value="1"/>
</dbReference>
<dbReference type="Pfam" id="PF08468">
    <property type="entry name" value="MTS_N"/>
    <property type="match status" value="1"/>
</dbReference>
<dbReference type="SUPFAM" id="SSF53335">
    <property type="entry name" value="S-adenosyl-L-methionine-dependent methyltransferases"/>
    <property type="match status" value="1"/>
</dbReference>
<feature type="chain" id="PRO_0000369743" description="Ribosomal RNA small subunit methyltransferase C">
    <location>
        <begin position="1"/>
        <end position="332"/>
    </location>
</feature>
<organism>
    <name type="scientific">Pseudomonas putida (strain GB-1)</name>
    <dbReference type="NCBI Taxonomy" id="76869"/>
    <lineage>
        <taxon>Bacteria</taxon>
        <taxon>Pseudomonadati</taxon>
        <taxon>Pseudomonadota</taxon>
        <taxon>Gammaproteobacteria</taxon>
        <taxon>Pseudomonadales</taxon>
        <taxon>Pseudomonadaceae</taxon>
        <taxon>Pseudomonas</taxon>
    </lineage>
</organism>